<name>WDR48_DROME</name>
<protein>
    <recommendedName>
        <fullName evidence="7">WD repeat-containing protein 48 homolog</fullName>
    </recommendedName>
    <alternativeName>
        <fullName evidence="8">USP1-associated factor 1</fullName>
    </alternativeName>
</protein>
<reference key="1">
    <citation type="journal article" date="2000" name="Science">
        <title>The genome sequence of Drosophila melanogaster.</title>
        <authorList>
            <person name="Adams M.D."/>
            <person name="Celniker S.E."/>
            <person name="Holt R.A."/>
            <person name="Evans C.A."/>
            <person name="Gocayne J.D."/>
            <person name="Amanatides P.G."/>
            <person name="Scherer S.E."/>
            <person name="Li P.W."/>
            <person name="Hoskins R.A."/>
            <person name="Galle R.F."/>
            <person name="George R.A."/>
            <person name="Lewis S.E."/>
            <person name="Richards S."/>
            <person name="Ashburner M."/>
            <person name="Henderson S.N."/>
            <person name="Sutton G.G."/>
            <person name="Wortman J.R."/>
            <person name="Yandell M.D."/>
            <person name="Zhang Q."/>
            <person name="Chen L.X."/>
            <person name="Brandon R.C."/>
            <person name="Rogers Y.-H.C."/>
            <person name="Blazej R.G."/>
            <person name="Champe M."/>
            <person name="Pfeiffer B.D."/>
            <person name="Wan K.H."/>
            <person name="Doyle C."/>
            <person name="Baxter E.G."/>
            <person name="Helt G."/>
            <person name="Nelson C.R."/>
            <person name="Miklos G.L.G."/>
            <person name="Abril J.F."/>
            <person name="Agbayani A."/>
            <person name="An H.-J."/>
            <person name="Andrews-Pfannkoch C."/>
            <person name="Baldwin D."/>
            <person name="Ballew R.M."/>
            <person name="Basu A."/>
            <person name="Baxendale J."/>
            <person name="Bayraktaroglu L."/>
            <person name="Beasley E.M."/>
            <person name="Beeson K.Y."/>
            <person name="Benos P.V."/>
            <person name="Berman B.P."/>
            <person name="Bhandari D."/>
            <person name="Bolshakov S."/>
            <person name="Borkova D."/>
            <person name="Botchan M.R."/>
            <person name="Bouck J."/>
            <person name="Brokstein P."/>
            <person name="Brottier P."/>
            <person name="Burtis K.C."/>
            <person name="Busam D.A."/>
            <person name="Butler H."/>
            <person name="Cadieu E."/>
            <person name="Center A."/>
            <person name="Chandra I."/>
            <person name="Cherry J.M."/>
            <person name="Cawley S."/>
            <person name="Dahlke C."/>
            <person name="Davenport L.B."/>
            <person name="Davies P."/>
            <person name="de Pablos B."/>
            <person name="Delcher A."/>
            <person name="Deng Z."/>
            <person name="Mays A.D."/>
            <person name="Dew I."/>
            <person name="Dietz S.M."/>
            <person name="Dodson K."/>
            <person name="Doup L.E."/>
            <person name="Downes M."/>
            <person name="Dugan-Rocha S."/>
            <person name="Dunkov B.C."/>
            <person name="Dunn P."/>
            <person name="Durbin K.J."/>
            <person name="Evangelista C.C."/>
            <person name="Ferraz C."/>
            <person name="Ferriera S."/>
            <person name="Fleischmann W."/>
            <person name="Fosler C."/>
            <person name="Gabrielian A.E."/>
            <person name="Garg N.S."/>
            <person name="Gelbart W.M."/>
            <person name="Glasser K."/>
            <person name="Glodek A."/>
            <person name="Gong F."/>
            <person name="Gorrell J.H."/>
            <person name="Gu Z."/>
            <person name="Guan P."/>
            <person name="Harris M."/>
            <person name="Harris N.L."/>
            <person name="Harvey D.A."/>
            <person name="Heiman T.J."/>
            <person name="Hernandez J.R."/>
            <person name="Houck J."/>
            <person name="Hostin D."/>
            <person name="Houston K.A."/>
            <person name="Howland T.J."/>
            <person name="Wei M.-H."/>
            <person name="Ibegwam C."/>
            <person name="Jalali M."/>
            <person name="Kalush F."/>
            <person name="Karpen G.H."/>
            <person name="Ke Z."/>
            <person name="Kennison J.A."/>
            <person name="Ketchum K.A."/>
            <person name="Kimmel B.E."/>
            <person name="Kodira C.D."/>
            <person name="Kraft C.L."/>
            <person name="Kravitz S."/>
            <person name="Kulp D."/>
            <person name="Lai Z."/>
            <person name="Lasko P."/>
            <person name="Lei Y."/>
            <person name="Levitsky A.A."/>
            <person name="Li J.H."/>
            <person name="Li Z."/>
            <person name="Liang Y."/>
            <person name="Lin X."/>
            <person name="Liu X."/>
            <person name="Mattei B."/>
            <person name="McIntosh T.C."/>
            <person name="McLeod M.P."/>
            <person name="McPherson D."/>
            <person name="Merkulov G."/>
            <person name="Milshina N.V."/>
            <person name="Mobarry C."/>
            <person name="Morris J."/>
            <person name="Moshrefi A."/>
            <person name="Mount S.M."/>
            <person name="Moy M."/>
            <person name="Murphy B."/>
            <person name="Murphy L."/>
            <person name="Muzny D.M."/>
            <person name="Nelson D.L."/>
            <person name="Nelson D.R."/>
            <person name="Nelson K.A."/>
            <person name="Nixon K."/>
            <person name="Nusskern D.R."/>
            <person name="Pacleb J.M."/>
            <person name="Palazzolo M."/>
            <person name="Pittman G.S."/>
            <person name="Pan S."/>
            <person name="Pollard J."/>
            <person name="Puri V."/>
            <person name="Reese M.G."/>
            <person name="Reinert K."/>
            <person name="Remington K."/>
            <person name="Saunders R.D.C."/>
            <person name="Scheeler F."/>
            <person name="Shen H."/>
            <person name="Shue B.C."/>
            <person name="Siden-Kiamos I."/>
            <person name="Simpson M."/>
            <person name="Skupski M.P."/>
            <person name="Smith T.J."/>
            <person name="Spier E."/>
            <person name="Spradling A.C."/>
            <person name="Stapleton M."/>
            <person name="Strong R."/>
            <person name="Sun E."/>
            <person name="Svirskas R."/>
            <person name="Tector C."/>
            <person name="Turner R."/>
            <person name="Venter E."/>
            <person name="Wang A.H."/>
            <person name="Wang X."/>
            <person name="Wang Z.-Y."/>
            <person name="Wassarman D.A."/>
            <person name="Weinstock G.M."/>
            <person name="Weissenbach J."/>
            <person name="Williams S.M."/>
            <person name="Woodage T."/>
            <person name="Worley K.C."/>
            <person name="Wu D."/>
            <person name="Yang S."/>
            <person name="Yao Q.A."/>
            <person name="Ye J."/>
            <person name="Yeh R.-F."/>
            <person name="Zaveri J.S."/>
            <person name="Zhan M."/>
            <person name="Zhang G."/>
            <person name="Zhao Q."/>
            <person name="Zheng L."/>
            <person name="Zheng X.H."/>
            <person name="Zhong F.N."/>
            <person name="Zhong W."/>
            <person name="Zhou X."/>
            <person name="Zhu S.C."/>
            <person name="Zhu X."/>
            <person name="Smith H.O."/>
            <person name="Gibbs R.A."/>
            <person name="Myers E.W."/>
            <person name="Rubin G.M."/>
            <person name="Venter J.C."/>
        </authorList>
    </citation>
    <scope>NUCLEOTIDE SEQUENCE [LARGE SCALE GENOMIC DNA]</scope>
    <source>
        <strain>Berkeley</strain>
    </source>
</reference>
<reference key="2">
    <citation type="journal article" date="2002" name="Genome Biol.">
        <title>Annotation of the Drosophila melanogaster euchromatic genome: a systematic review.</title>
        <authorList>
            <person name="Misra S."/>
            <person name="Crosby M.A."/>
            <person name="Mungall C.J."/>
            <person name="Matthews B.B."/>
            <person name="Campbell K.S."/>
            <person name="Hradecky P."/>
            <person name="Huang Y."/>
            <person name="Kaminker J.S."/>
            <person name="Millburn G.H."/>
            <person name="Prochnik S.E."/>
            <person name="Smith C.D."/>
            <person name="Tupy J.L."/>
            <person name="Whitfield E.J."/>
            <person name="Bayraktaroglu L."/>
            <person name="Berman B.P."/>
            <person name="Bettencourt B.R."/>
            <person name="Celniker S.E."/>
            <person name="de Grey A.D.N.J."/>
            <person name="Drysdale R.A."/>
            <person name="Harris N.L."/>
            <person name="Richter J."/>
            <person name="Russo S."/>
            <person name="Schroeder A.J."/>
            <person name="Shu S.Q."/>
            <person name="Stapleton M."/>
            <person name="Yamada C."/>
            <person name="Ashburner M."/>
            <person name="Gelbart W.M."/>
            <person name="Rubin G.M."/>
            <person name="Lewis S.E."/>
        </authorList>
    </citation>
    <scope>GENOME REANNOTATION</scope>
    <source>
        <strain>Berkeley</strain>
    </source>
</reference>
<reference key="3">
    <citation type="journal article" date="2002" name="Genome Biol.">
        <title>A Drosophila full-length cDNA resource.</title>
        <authorList>
            <person name="Stapleton M."/>
            <person name="Carlson J.W."/>
            <person name="Brokstein P."/>
            <person name="Yu C."/>
            <person name="Champe M."/>
            <person name="George R.A."/>
            <person name="Guarin H."/>
            <person name="Kronmiller B."/>
            <person name="Pacleb J.M."/>
            <person name="Park S."/>
            <person name="Wan K.H."/>
            <person name="Rubin G.M."/>
            <person name="Celniker S.E."/>
        </authorList>
    </citation>
    <scope>NUCLEOTIDE SEQUENCE [LARGE SCALE MRNA]</scope>
    <source>
        <strain>Berkeley</strain>
        <tissue>Embryo</tissue>
    </source>
</reference>
<reference key="4">
    <citation type="submission" date="2006-10" db="EMBL/GenBank/DDBJ databases">
        <authorList>
            <person name="Stapleton M."/>
            <person name="Carlson J.W."/>
            <person name="Frise E."/>
            <person name="Kapadia B."/>
            <person name="Park S."/>
            <person name="Wan K.H."/>
            <person name="Yu C."/>
            <person name="Celniker S.E."/>
        </authorList>
    </citation>
    <scope>NUCLEOTIDE SEQUENCE [LARGE SCALE MRNA]</scope>
    <source>
        <strain>Berkeley</strain>
    </source>
</reference>
<reference key="5">
    <citation type="journal article" date="2023" name="Nat. Commun.">
        <title>The USP46 deubiquitylase complex increases Wingless/Wnt signaling strength by stabilizing Arrow/LRP6.</title>
        <authorList>
            <person name="Spencer Z.T."/>
            <person name="Ng V.H."/>
            <person name="Benchabane H."/>
            <person name="Siddiqui G.S."/>
            <person name="Duwadi D."/>
            <person name="Maines B."/>
            <person name="Bryant J.M."/>
            <person name="Schwarzkopf A."/>
            <person name="Yuan K."/>
            <person name="Kassel S.N."/>
            <person name="Mishra A."/>
            <person name="Pimentel A."/>
            <person name="Lebensohn A.M."/>
            <person name="Rohatgi R."/>
            <person name="Gerber S.A."/>
            <person name="Robbins D.J."/>
            <person name="Lee E."/>
            <person name="Ahmed Y."/>
        </authorList>
    </citation>
    <scope>FUNCTION</scope>
    <scope>IDENTIFICATION IN THE USP46 COMPLEX</scope>
    <scope>INTERACTION WITH ARR</scope>
    <scope>DEVELOPMENTAL STAGE</scope>
    <scope>DISRUPTION PHENOTYPE</scope>
</reference>
<feature type="chain" id="PRO_0000378981" description="WD repeat-containing protein 48 homolog">
    <location>
        <begin position="1"/>
        <end position="668"/>
    </location>
</feature>
<feature type="repeat" description="WD 1" evidence="3">
    <location>
        <begin position="26"/>
        <end position="65"/>
    </location>
</feature>
<feature type="repeat" description="WD 2" evidence="3">
    <location>
        <begin position="71"/>
        <end position="110"/>
    </location>
</feature>
<feature type="repeat" description="WD 3" evidence="3">
    <location>
        <begin position="113"/>
        <end position="152"/>
    </location>
</feature>
<feature type="repeat" description="WD 4" evidence="3">
    <location>
        <begin position="164"/>
        <end position="203"/>
    </location>
</feature>
<feature type="repeat" description="WD 5" evidence="3">
    <location>
        <begin position="206"/>
        <end position="245"/>
    </location>
</feature>
<feature type="repeat" description="WD 6" evidence="3">
    <location>
        <begin position="248"/>
        <end position="287"/>
    </location>
</feature>
<feature type="repeat" description="WD 7" evidence="3">
    <location>
        <begin position="290"/>
        <end position="329"/>
    </location>
</feature>
<feature type="repeat" description="WD 8" evidence="3">
    <location>
        <begin position="350"/>
        <end position="389"/>
    </location>
</feature>
<feature type="region of interest" description="Disordered" evidence="4">
    <location>
        <begin position="592"/>
        <end position="616"/>
    </location>
</feature>
<feature type="sequence conflict" description="In Ref. 3; AAN71491." evidence="7" ref="3">
    <original>A</original>
    <variation>T</variation>
    <location>
        <position position="354"/>
    </location>
</feature>
<proteinExistence type="evidence at protein level"/>
<evidence type="ECO:0000250" key="1"/>
<evidence type="ECO:0000250" key="2">
    <source>
        <dbReference type="UniProtKB" id="Q8TAF3"/>
    </source>
</evidence>
<evidence type="ECO:0000255" key="3"/>
<evidence type="ECO:0000256" key="4">
    <source>
        <dbReference type="SAM" id="MobiDB-lite"/>
    </source>
</evidence>
<evidence type="ECO:0000269" key="5">
    <source>
    </source>
</evidence>
<evidence type="ECO:0000303" key="6">
    <source>
    </source>
</evidence>
<evidence type="ECO:0000305" key="7"/>
<evidence type="ECO:0000312" key="8">
    <source>
        <dbReference type="FlyBase" id="FBgn0033607"/>
    </source>
</evidence>
<evidence type="ECO:0000312" key="9">
    <source>
        <dbReference type="Proteomes" id="UP000000803"/>
    </source>
</evidence>
<gene>
    <name evidence="6 8" type="primary">Uaf1</name>
    <name evidence="8" type="ORF">CG9062</name>
</gene>
<accession>Q1LZ08</accession>
<accession>Q8IGK7</accession>
<organism evidence="9">
    <name type="scientific">Drosophila melanogaster</name>
    <name type="common">Fruit fly</name>
    <dbReference type="NCBI Taxonomy" id="7227"/>
    <lineage>
        <taxon>Eukaryota</taxon>
        <taxon>Metazoa</taxon>
        <taxon>Ecdysozoa</taxon>
        <taxon>Arthropoda</taxon>
        <taxon>Hexapoda</taxon>
        <taxon>Insecta</taxon>
        <taxon>Pterygota</taxon>
        <taxon>Neoptera</taxon>
        <taxon>Endopterygota</taxon>
        <taxon>Diptera</taxon>
        <taxon>Brachycera</taxon>
        <taxon>Muscomorpha</taxon>
        <taxon>Ephydroidea</taxon>
        <taxon>Drosophilidae</taxon>
        <taxon>Drosophila</taxon>
        <taxon>Sophophora</taxon>
    </lineage>
</organism>
<comment type="function">
    <text evidence="1 2 5">Regulatory component of the Usp12-46 deubiquitylase complex (PubMed:37798281). activates deubiquitination by increasing the catalytic turnover without increasing the affinity of deubiquitinating enzymes for the substrate (By similarity). The complex deubiquitylates the wg/wingless-signaling receptor arr/arrow, which stabilizes the receptor and increases its concentration at the cell surface; this enhances the sensitivity of cells to wg/wingless-signal stimulation (PubMed:37798281). This increases the amplitude and spatial range of the signaling response to the wg/wingless morphogen gradient, facilitating the precise concentration-dependent regulation of its target genes (PubMed:37798281). Together with Wdr20 and Usp12-46 required for wg/wingless-mediated signaling in the wing imaginal disc and for wg/wingless-dependent regulation of intestinal stem cell proliferation (PubMed:37798281).</text>
</comment>
<comment type="subunit">
    <text evidence="5">Catalytic component of the Usp12-46 deubiquitylase complex consisting of Usp12-46, Wdr20 and Uaf1; regulatory subunit that, together wtih Wdr20, stabilizes Usp12-46 (PubMed:37798281). The Usp12-46 deubiquitylase complex associates with arr/arrow; the interaction leads to deubiquitination and stabilization of arr/arrow (PubMed:37798281).</text>
</comment>
<comment type="developmental stage">
    <text evidence="5">Expressed in the larval wing imaginal disc.</text>
</comment>
<comment type="disruption phenotype">
    <text evidence="5">Viable but sterile with reduced lifespan.</text>
</comment>
<comment type="similarity">
    <text evidence="7">Belongs to the WD repeat WDR48 family.</text>
</comment>
<keyword id="KW-1185">Reference proteome</keyword>
<keyword id="KW-0677">Repeat</keyword>
<keyword id="KW-0833">Ubl conjugation pathway</keyword>
<keyword id="KW-0853">WD repeat</keyword>
<sequence length="668" mass="75266">MLTHKTCQARKKMQVSFVIRDAEEKQHRNGVNALQLDANNGKLYSAGRDAIIRVWNTRTDSSEKYIQSMEHHNDWVNDIVLCCNGRNLISASCDTTVKVWNAQKGFCMSTLRTHRDYVQALAYAKDREQVASAGLDKAIFLWDVNTLTALTASNNTVTTSSLTGSKDSIYSLAMNPSGTVIVSGSTENILRIWDPRTCMRRMKLRGHTENVRCLVVSPDGNQVVSGSSDGTIKVWNLGQQRCVQTIHVHKEGVWSLLMSENFQYIISGSRDRNIIVTEMRNPSNKTLVCEEQAPVLSLGYNIDKTGVWATTWNSDIRCWKLPMYDRCTLNSSGGMDAQWTQGGTEVACIKGGAAIKECAVLNDKRYIITKDSQDQVVVYDVLRVVKKEQLGAVDFEAEVKKRNKQVYIPNWFTVDLKTGMPTIVLGQEEVDCFSAWVSIEAGLPECVDPTTEIKINYGKLLLEALLEYWTPPHSIPPNEMEPDMHGNGYFQVPKHTPVIFSEVGGRTVCRLLVRDAAGDSESTLLHETAPQWVTDVVIEKNIPKFLKIPFFLQPHPQMTKPERTKKDRLVANEFIQCRKVCEHVLEKVLNAETTPSGGNANNSLQNSQSDANSEGSQLPAEERIELWCNDVVVDPNMDLRTVRHFIWKQSTDLTFQYKTKQNFNYDGK</sequence>
<dbReference type="EMBL" id="AE013599">
    <property type="protein sequence ID" value="AAM68723.1"/>
    <property type="molecule type" value="Genomic_DNA"/>
</dbReference>
<dbReference type="EMBL" id="BT001736">
    <property type="protein sequence ID" value="AAN71491.1"/>
    <property type="molecule type" value="mRNA"/>
</dbReference>
<dbReference type="EMBL" id="BT025218">
    <property type="protein sequence ID" value="ABF17909.1"/>
    <property type="molecule type" value="mRNA"/>
</dbReference>
<dbReference type="RefSeq" id="NP_725018.1">
    <property type="nucleotide sequence ID" value="NM_165814.3"/>
</dbReference>
<dbReference type="SMR" id="Q1LZ08"/>
<dbReference type="BioGRID" id="61994">
    <property type="interactions" value="2"/>
</dbReference>
<dbReference type="ComplexPortal" id="CPX-9262">
    <property type="entry name" value="USP46 deubiquitinase complex"/>
</dbReference>
<dbReference type="FunCoup" id="Q1LZ08">
    <property type="interactions" value="3237"/>
</dbReference>
<dbReference type="IntAct" id="Q1LZ08">
    <property type="interactions" value="3"/>
</dbReference>
<dbReference type="STRING" id="7227.FBpp0304695"/>
<dbReference type="PaxDb" id="7227-FBpp0304695"/>
<dbReference type="DNASU" id="36199"/>
<dbReference type="EnsemblMetazoa" id="FBtr0088181">
    <property type="protein sequence ID" value="FBpp0087277"/>
    <property type="gene ID" value="FBgn0033607"/>
</dbReference>
<dbReference type="GeneID" id="36199"/>
<dbReference type="KEGG" id="dme:Dmel_CG9062"/>
<dbReference type="UCSC" id="CG9062-RB">
    <property type="organism name" value="d. melanogaster"/>
</dbReference>
<dbReference type="AGR" id="FB:FBgn0033607"/>
<dbReference type="FlyBase" id="FBgn0033607">
    <property type="gene designation" value="Uaf1"/>
</dbReference>
<dbReference type="VEuPathDB" id="VectorBase:FBgn0033607"/>
<dbReference type="eggNOG" id="KOG0308">
    <property type="taxonomic scope" value="Eukaryota"/>
</dbReference>
<dbReference type="GeneTree" id="ENSGT00920000149157"/>
<dbReference type="HOGENOM" id="CLU_014960_0_1_1"/>
<dbReference type="InParanoid" id="Q1LZ08"/>
<dbReference type="OrthoDB" id="2421129at2759"/>
<dbReference type="PhylomeDB" id="Q1LZ08"/>
<dbReference type="Reactome" id="R-DME-5689880">
    <property type="pathway name" value="Ub-specific processing proteases"/>
</dbReference>
<dbReference type="BioGRID-ORCS" id="36199">
    <property type="hits" value="0 hits in 1 CRISPR screen"/>
</dbReference>
<dbReference type="GenomeRNAi" id="36199"/>
<dbReference type="PRO" id="PR:Q1LZ08"/>
<dbReference type="Proteomes" id="UP000000803">
    <property type="component" value="Chromosome 2R"/>
</dbReference>
<dbReference type="Bgee" id="FBgn0033607">
    <property type="expression patterns" value="Expressed in egg cell and 30 other cell types or tissues"/>
</dbReference>
<dbReference type="ExpressionAtlas" id="Q1LZ08">
    <property type="expression patterns" value="baseline and differential"/>
</dbReference>
<dbReference type="GO" id="GO:0005634">
    <property type="term" value="C:nucleus"/>
    <property type="evidence" value="ECO:0000250"/>
    <property type="project" value="FlyBase"/>
</dbReference>
<dbReference type="GO" id="GO:1905368">
    <property type="term" value="C:peptidase complex"/>
    <property type="evidence" value="ECO:0000353"/>
    <property type="project" value="FlyBase"/>
</dbReference>
<dbReference type="GO" id="GO:0035800">
    <property type="term" value="F:deubiquitinase activator activity"/>
    <property type="evidence" value="ECO:0000304"/>
    <property type="project" value="FlyBase"/>
</dbReference>
<dbReference type="GO" id="GO:0043130">
    <property type="term" value="F:ubiquitin binding"/>
    <property type="evidence" value="ECO:0000250"/>
    <property type="project" value="FlyBase"/>
</dbReference>
<dbReference type="GO" id="GO:0000724">
    <property type="term" value="P:double-strand break repair via homologous recombination"/>
    <property type="evidence" value="ECO:0000318"/>
    <property type="project" value="GO_Central"/>
</dbReference>
<dbReference type="GO" id="GO:2000059">
    <property type="term" value="P:negative regulation of ubiquitin-dependent protein catabolic process"/>
    <property type="evidence" value="ECO:0000314"/>
    <property type="project" value="FlyBase"/>
</dbReference>
<dbReference type="GO" id="GO:0090263">
    <property type="term" value="P:positive regulation of canonical Wnt signaling pathway"/>
    <property type="evidence" value="ECO:0000315"/>
    <property type="project" value="FlyBase"/>
</dbReference>
<dbReference type="CDD" id="cd17041">
    <property type="entry name" value="Ubl_WDR48"/>
    <property type="match status" value="1"/>
</dbReference>
<dbReference type="CDD" id="cd00200">
    <property type="entry name" value="WD40"/>
    <property type="match status" value="1"/>
</dbReference>
<dbReference type="FunFam" id="2.130.10.10:FF:000543">
    <property type="entry name" value="WD repeat-containing protein 48 homolog"/>
    <property type="match status" value="1"/>
</dbReference>
<dbReference type="FunFam" id="2.130.10.10:FF:000984">
    <property type="entry name" value="WD repeat-containing protein 48 homolog"/>
    <property type="match status" value="1"/>
</dbReference>
<dbReference type="Gene3D" id="2.130.10.10">
    <property type="entry name" value="YVTN repeat-like/Quinoprotein amine dehydrogenase"/>
    <property type="match status" value="2"/>
</dbReference>
<dbReference type="InterPro" id="IPR020472">
    <property type="entry name" value="G-protein_beta_WD-40_rep"/>
</dbReference>
<dbReference type="InterPro" id="IPR015943">
    <property type="entry name" value="WD40/YVTN_repeat-like_dom_sf"/>
</dbReference>
<dbReference type="InterPro" id="IPR019775">
    <property type="entry name" value="WD40_repeat_CS"/>
</dbReference>
<dbReference type="InterPro" id="IPR036322">
    <property type="entry name" value="WD40_repeat_dom_sf"/>
</dbReference>
<dbReference type="InterPro" id="IPR001680">
    <property type="entry name" value="WD40_rpt"/>
</dbReference>
<dbReference type="InterPro" id="IPR051246">
    <property type="entry name" value="WDR48"/>
</dbReference>
<dbReference type="InterPro" id="IPR021772">
    <property type="entry name" value="WDR48/Bun107"/>
</dbReference>
<dbReference type="PANTHER" id="PTHR19862">
    <property type="entry name" value="WD REPEAT-CONTAINING PROTEIN 48"/>
    <property type="match status" value="1"/>
</dbReference>
<dbReference type="PANTHER" id="PTHR19862:SF14">
    <property type="entry name" value="WD REPEAT-CONTAINING PROTEIN 48"/>
    <property type="match status" value="1"/>
</dbReference>
<dbReference type="Pfam" id="PF11816">
    <property type="entry name" value="DUF3337"/>
    <property type="match status" value="1"/>
</dbReference>
<dbReference type="Pfam" id="PF00400">
    <property type="entry name" value="WD40"/>
    <property type="match status" value="6"/>
</dbReference>
<dbReference type="PRINTS" id="PR00320">
    <property type="entry name" value="GPROTEINBRPT"/>
</dbReference>
<dbReference type="SMART" id="SM00320">
    <property type="entry name" value="WD40"/>
    <property type="match status" value="8"/>
</dbReference>
<dbReference type="SUPFAM" id="SSF50978">
    <property type="entry name" value="WD40 repeat-like"/>
    <property type="match status" value="1"/>
</dbReference>
<dbReference type="PROSITE" id="PS00678">
    <property type="entry name" value="WD_REPEATS_1"/>
    <property type="match status" value="4"/>
</dbReference>
<dbReference type="PROSITE" id="PS50082">
    <property type="entry name" value="WD_REPEATS_2"/>
    <property type="match status" value="5"/>
</dbReference>
<dbReference type="PROSITE" id="PS50294">
    <property type="entry name" value="WD_REPEATS_REGION"/>
    <property type="match status" value="5"/>
</dbReference>